<name>Y1728_RHIME</name>
<organism>
    <name type="scientific">Rhizobium meliloti (strain 1021)</name>
    <name type="common">Ensifer meliloti</name>
    <name type="synonym">Sinorhizobium meliloti</name>
    <dbReference type="NCBI Taxonomy" id="266834"/>
    <lineage>
        <taxon>Bacteria</taxon>
        <taxon>Pseudomonadati</taxon>
        <taxon>Pseudomonadota</taxon>
        <taxon>Alphaproteobacteria</taxon>
        <taxon>Hyphomicrobiales</taxon>
        <taxon>Rhizobiaceae</taxon>
        <taxon>Sinorhizobium/Ensifer group</taxon>
        <taxon>Sinorhizobium</taxon>
    </lineage>
</organism>
<protein>
    <recommendedName>
        <fullName>UPF0758 protein R01728</fullName>
    </recommendedName>
</protein>
<dbReference type="EMBL" id="AL591688">
    <property type="protein sequence ID" value="CAC46307.1"/>
    <property type="molecule type" value="Genomic_DNA"/>
</dbReference>
<dbReference type="RefSeq" id="NP_385834.1">
    <property type="nucleotide sequence ID" value="NC_003047.1"/>
</dbReference>
<dbReference type="RefSeq" id="WP_010969427.1">
    <property type="nucleotide sequence ID" value="NC_003047.1"/>
</dbReference>
<dbReference type="SMR" id="Q92PL6"/>
<dbReference type="EnsemblBacteria" id="CAC46307">
    <property type="protein sequence ID" value="CAC46307"/>
    <property type="gene ID" value="SMc00299"/>
</dbReference>
<dbReference type="KEGG" id="sme:SMc00299"/>
<dbReference type="PATRIC" id="fig|266834.11.peg.3166"/>
<dbReference type="eggNOG" id="COG2003">
    <property type="taxonomic scope" value="Bacteria"/>
</dbReference>
<dbReference type="HOGENOM" id="CLU_073529_0_0_5"/>
<dbReference type="OrthoDB" id="9804482at2"/>
<dbReference type="Proteomes" id="UP000001976">
    <property type="component" value="Chromosome"/>
</dbReference>
<dbReference type="GO" id="GO:0046872">
    <property type="term" value="F:metal ion binding"/>
    <property type="evidence" value="ECO:0007669"/>
    <property type="project" value="UniProtKB-KW"/>
</dbReference>
<dbReference type="GO" id="GO:0008237">
    <property type="term" value="F:metallopeptidase activity"/>
    <property type="evidence" value="ECO:0007669"/>
    <property type="project" value="UniProtKB-KW"/>
</dbReference>
<dbReference type="GO" id="GO:0006508">
    <property type="term" value="P:proteolysis"/>
    <property type="evidence" value="ECO:0007669"/>
    <property type="project" value="UniProtKB-KW"/>
</dbReference>
<dbReference type="CDD" id="cd08071">
    <property type="entry name" value="MPN_DUF2466"/>
    <property type="match status" value="1"/>
</dbReference>
<dbReference type="Gene3D" id="1.10.150.20">
    <property type="entry name" value="5' to 3' exonuclease, C-terminal subdomain"/>
    <property type="match status" value="1"/>
</dbReference>
<dbReference type="Gene3D" id="3.40.140.10">
    <property type="entry name" value="Cytidine Deaminase, domain 2"/>
    <property type="match status" value="1"/>
</dbReference>
<dbReference type="InterPro" id="IPR037518">
    <property type="entry name" value="MPN"/>
</dbReference>
<dbReference type="InterPro" id="IPR025657">
    <property type="entry name" value="RadC_JAB"/>
</dbReference>
<dbReference type="InterPro" id="IPR010994">
    <property type="entry name" value="RuvA_2-like"/>
</dbReference>
<dbReference type="InterPro" id="IPR001405">
    <property type="entry name" value="UPF0758"/>
</dbReference>
<dbReference type="InterPro" id="IPR020891">
    <property type="entry name" value="UPF0758_CS"/>
</dbReference>
<dbReference type="NCBIfam" id="NF000642">
    <property type="entry name" value="PRK00024.1"/>
    <property type="match status" value="1"/>
</dbReference>
<dbReference type="NCBIfam" id="TIGR00608">
    <property type="entry name" value="radc"/>
    <property type="match status" value="1"/>
</dbReference>
<dbReference type="PANTHER" id="PTHR30471">
    <property type="entry name" value="DNA REPAIR PROTEIN RADC"/>
    <property type="match status" value="1"/>
</dbReference>
<dbReference type="PANTHER" id="PTHR30471:SF3">
    <property type="entry name" value="UPF0758 PROTEIN YEES-RELATED"/>
    <property type="match status" value="1"/>
</dbReference>
<dbReference type="Pfam" id="PF04002">
    <property type="entry name" value="RadC"/>
    <property type="match status" value="1"/>
</dbReference>
<dbReference type="SUPFAM" id="SSF102712">
    <property type="entry name" value="JAB1/MPN domain"/>
    <property type="match status" value="1"/>
</dbReference>
<dbReference type="SUPFAM" id="SSF47781">
    <property type="entry name" value="RuvA domain 2-like"/>
    <property type="match status" value="1"/>
</dbReference>
<dbReference type="PROSITE" id="PS50249">
    <property type="entry name" value="MPN"/>
    <property type="match status" value="1"/>
</dbReference>
<dbReference type="PROSITE" id="PS01302">
    <property type="entry name" value="UPF0758"/>
    <property type="match status" value="1"/>
</dbReference>
<proteinExistence type="inferred from homology"/>
<comment type="similarity">
    <text evidence="3">Belongs to the UPF0758 family.</text>
</comment>
<feature type="chain" id="PRO_0000190721" description="UPF0758 protein R01728">
    <location>
        <begin position="1"/>
        <end position="262"/>
    </location>
</feature>
<feature type="domain" description="MPN" evidence="1">
    <location>
        <begin position="140"/>
        <end position="262"/>
    </location>
</feature>
<feature type="region of interest" description="Disordered" evidence="2">
    <location>
        <begin position="23"/>
        <end position="44"/>
    </location>
</feature>
<feature type="short sequence motif" description="JAMM motif" evidence="1">
    <location>
        <begin position="211"/>
        <end position="224"/>
    </location>
</feature>
<feature type="compositionally biased region" description="Low complexity" evidence="2">
    <location>
        <begin position="31"/>
        <end position="40"/>
    </location>
</feature>
<feature type="binding site" evidence="1">
    <location>
        <position position="211"/>
    </location>
    <ligand>
        <name>Zn(2+)</name>
        <dbReference type="ChEBI" id="CHEBI:29105"/>
        <note>catalytic</note>
    </ligand>
</feature>
<feature type="binding site" evidence="1">
    <location>
        <position position="213"/>
    </location>
    <ligand>
        <name>Zn(2+)</name>
        <dbReference type="ChEBI" id="CHEBI:29105"/>
        <note>catalytic</note>
    </ligand>
</feature>
<feature type="binding site" evidence="1">
    <location>
        <position position="224"/>
    </location>
    <ligand>
        <name>Zn(2+)</name>
        <dbReference type="ChEBI" id="CHEBI:29105"/>
        <note>catalytic</note>
    </ligand>
</feature>
<gene>
    <name type="ordered locus">R01728</name>
    <name type="ORF">SMc00299</name>
</gene>
<reference key="1">
    <citation type="journal article" date="2001" name="Proc. Natl. Acad. Sci. U.S.A.">
        <title>Analysis of the chromosome sequence of the legume symbiont Sinorhizobium meliloti strain 1021.</title>
        <authorList>
            <person name="Capela D."/>
            <person name="Barloy-Hubler F."/>
            <person name="Gouzy J."/>
            <person name="Bothe G."/>
            <person name="Ampe F."/>
            <person name="Batut J."/>
            <person name="Boistard P."/>
            <person name="Becker A."/>
            <person name="Boutry M."/>
            <person name="Cadieu E."/>
            <person name="Dreano S."/>
            <person name="Gloux S."/>
            <person name="Godrie T."/>
            <person name="Goffeau A."/>
            <person name="Kahn D."/>
            <person name="Kiss E."/>
            <person name="Lelaure V."/>
            <person name="Masuy D."/>
            <person name="Pohl T."/>
            <person name="Portetelle D."/>
            <person name="Puehler A."/>
            <person name="Purnelle B."/>
            <person name="Ramsperger U."/>
            <person name="Renard C."/>
            <person name="Thebault P."/>
            <person name="Vandenbol M."/>
            <person name="Weidner S."/>
            <person name="Galibert F."/>
        </authorList>
    </citation>
    <scope>NUCLEOTIDE SEQUENCE [LARGE SCALE GENOMIC DNA]</scope>
    <source>
        <strain>1021</strain>
    </source>
</reference>
<reference key="2">
    <citation type="journal article" date="2001" name="Science">
        <title>The composite genome of the legume symbiont Sinorhizobium meliloti.</title>
        <authorList>
            <person name="Galibert F."/>
            <person name="Finan T.M."/>
            <person name="Long S.R."/>
            <person name="Puehler A."/>
            <person name="Abola P."/>
            <person name="Ampe F."/>
            <person name="Barloy-Hubler F."/>
            <person name="Barnett M.J."/>
            <person name="Becker A."/>
            <person name="Boistard P."/>
            <person name="Bothe G."/>
            <person name="Boutry M."/>
            <person name="Bowser L."/>
            <person name="Buhrmester J."/>
            <person name="Cadieu E."/>
            <person name="Capela D."/>
            <person name="Chain P."/>
            <person name="Cowie A."/>
            <person name="Davis R.W."/>
            <person name="Dreano S."/>
            <person name="Federspiel N.A."/>
            <person name="Fisher R.F."/>
            <person name="Gloux S."/>
            <person name="Godrie T."/>
            <person name="Goffeau A."/>
            <person name="Golding B."/>
            <person name="Gouzy J."/>
            <person name="Gurjal M."/>
            <person name="Hernandez-Lucas I."/>
            <person name="Hong A."/>
            <person name="Huizar L."/>
            <person name="Hyman R.W."/>
            <person name="Jones T."/>
            <person name="Kahn D."/>
            <person name="Kahn M.L."/>
            <person name="Kalman S."/>
            <person name="Keating D.H."/>
            <person name="Kiss E."/>
            <person name="Komp C."/>
            <person name="Lelaure V."/>
            <person name="Masuy D."/>
            <person name="Palm C."/>
            <person name="Peck M.C."/>
            <person name="Pohl T.M."/>
            <person name="Portetelle D."/>
            <person name="Purnelle B."/>
            <person name="Ramsperger U."/>
            <person name="Surzycki R."/>
            <person name="Thebault P."/>
            <person name="Vandenbol M."/>
            <person name="Vorhoelter F.J."/>
            <person name="Weidner S."/>
            <person name="Wells D.H."/>
            <person name="Wong K."/>
            <person name="Yeh K.-C."/>
            <person name="Batut J."/>
        </authorList>
    </citation>
    <scope>NUCLEOTIDE SEQUENCE [LARGE SCALE GENOMIC DNA]</scope>
    <source>
        <strain>1021</strain>
    </source>
</reference>
<keyword id="KW-0378">Hydrolase</keyword>
<keyword id="KW-0479">Metal-binding</keyword>
<keyword id="KW-0482">Metalloprotease</keyword>
<keyword id="KW-0645">Protease</keyword>
<keyword id="KW-1185">Reference proteome</keyword>
<keyword id="KW-0862">Zinc</keyword>
<evidence type="ECO:0000255" key="1">
    <source>
        <dbReference type="PROSITE-ProRule" id="PRU01182"/>
    </source>
</evidence>
<evidence type="ECO:0000256" key="2">
    <source>
        <dbReference type="SAM" id="MobiDB-lite"/>
    </source>
</evidence>
<evidence type="ECO:0000305" key="3"/>
<accession>Q92PL6</accession>
<sequence length="262" mass="29182">MTKIPPGEPDELFDAADERGFFPEKRTRNSPATAPAPATDTHYHGHRDRLRARYREHGDAALADYEILELILFRLIPRRDTKPIAKALLDRFGTLAAVFGAPLHLLQEVKGVGESVALDLKLVATASHRMLRSELRNKQVLSSWSAVIDYCHAAMAHETKEQFRILFLDKRNTLIADEVQQQGTIDHTPVYPREVVKRALELSATALILVHNHPSGDPTPSRADIDMTKLIAEAAKPLGIALHDHVIIGKDGHVSLKGLRLF</sequence>